<reference key="1">
    <citation type="journal article" date="1999" name="Mol. Biol. Evol.">
        <title>Isolation of novel GRO genes and a phylogenetic analysis of the CXC chemokine subfamily in mammals.</title>
        <authorList>
            <person name="Modi W.S."/>
            <person name="Yoshimura T."/>
        </authorList>
    </citation>
    <scope>NUCLEOTIDE SEQUENCE [MRNA]</scope>
</reference>
<sequence length="98" mass="10393">MAPAASSAPRLLRAAMLLLLLVAAGRRAAGAPVVNELRCQCLQTLQGIHLKNIQSVKVTTPGPHCDQTEVIATLKTGQEVCLNPAAPMVKKIIDKMLN</sequence>
<organism>
    <name type="scientific">Bos taurus</name>
    <name type="common">Bovine</name>
    <dbReference type="NCBI Taxonomy" id="9913"/>
    <lineage>
        <taxon>Eukaryota</taxon>
        <taxon>Metazoa</taxon>
        <taxon>Chordata</taxon>
        <taxon>Craniata</taxon>
        <taxon>Vertebrata</taxon>
        <taxon>Euteleostomi</taxon>
        <taxon>Mammalia</taxon>
        <taxon>Eutheria</taxon>
        <taxon>Laurasiatheria</taxon>
        <taxon>Artiodactyla</taxon>
        <taxon>Ruminantia</taxon>
        <taxon>Pecora</taxon>
        <taxon>Bovidae</taxon>
        <taxon>Bovinae</taxon>
        <taxon>Bos</taxon>
    </lineage>
</organism>
<proteinExistence type="inferred from homology"/>
<keyword id="KW-0202">Cytokine</keyword>
<keyword id="KW-1015">Disulfide bond</keyword>
<keyword id="KW-0339">Growth factor</keyword>
<keyword id="KW-0395">Inflammatory response</keyword>
<keyword id="KW-1185">Reference proteome</keyword>
<keyword id="KW-0964">Secreted</keyword>
<keyword id="KW-0732">Signal</keyword>
<accession>O46675</accession>
<name>GROG_BOVIN</name>
<feature type="signal peptide" evidence="2">
    <location>
        <begin position="1"/>
        <end position="29"/>
    </location>
</feature>
<feature type="chain" id="PRO_0000005060" description="Growth-regulated protein homolog gamma">
    <location>
        <begin position="30"/>
        <end position="98"/>
    </location>
</feature>
<feature type="disulfide bond" evidence="1">
    <location>
        <begin position="39"/>
        <end position="65"/>
    </location>
</feature>
<feature type="disulfide bond" evidence="1">
    <location>
        <begin position="41"/>
        <end position="81"/>
    </location>
</feature>
<dbReference type="EMBL" id="U95811">
    <property type="protein sequence ID" value="AAB93927.1"/>
    <property type="molecule type" value="mRNA"/>
</dbReference>
<dbReference type="RefSeq" id="NP_776724.1">
    <property type="nucleotide sequence ID" value="NM_174299.3"/>
</dbReference>
<dbReference type="RefSeq" id="XP_005208119.1">
    <property type="nucleotide sequence ID" value="XM_005208062.5"/>
</dbReference>
<dbReference type="SMR" id="O46675"/>
<dbReference type="FunCoup" id="O46675">
    <property type="interactions" value="379"/>
</dbReference>
<dbReference type="STRING" id="9913.ENSBTAP00000039327"/>
<dbReference type="PaxDb" id="9913-ENSBTAP00000039327"/>
<dbReference type="Ensembl" id="ENSBTAT00000039536.4">
    <property type="protein sequence ID" value="ENSBTAP00000039327.3"/>
    <property type="gene ID" value="ENSBTAG00000027513.5"/>
</dbReference>
<dbReference type="GeneID" id="281214"/>
<dbReference type="KEGG" id="bta:281214"/>
<dbReference type="CTD" id="2920"/>
<dbReference type="VEuPathDB" id="HostDB:ENSBTAG00000027513"/>
<dbReference type="eggNOG" id="ENOG502S7MM">
    <property type="taxonomic scope" value="Eukaryota"/>
</dbReference>
<dbReference type="GeneTree" id="ENSGT00940000155233"/>
<dbReference type="HOGENOM" id="CLU_143902_1_0_1"/>
<dbReference type="InParanoid" id="O46675"/>
<dbReference type="OMA" id="NGREACL"/>
<dbReference type="OrthoDB" id="8872899at2759"/>
<dbReference type="TreeFam" id="TF333433"/>
<dbReference type="Reactome" id="R-BTA-380108">
    <property type="pathway name" value="Chemokine receptors bind chemokines"/>
</dbReference>
<dbReference type="Reactome" id="R-BTA-418594">
    <property type="pathway name" value="G alpha (i) signalling events"/>
</dbReference>
<dbReference type="Reactome" id="R-BTA-6798695">
    <property type="pathway name" value="Neutrophil degranulation"/>
</dbReference>
<dbReference type="Proteomes" id="UP000009136">
    <property type="component" value="Chromosome 6"/>
</dbReference>
<dbReference type="Bgee" id="ENSBTAG00000027513">
    <property type="expression patterns" value="Expressed in intramuscular adipose tissue and 57 other cell types or tissues"/>
</dbReference>
<dbReference type="GO" id="GO:0005615">
    <property type="term" value="C:extracellular space"/>
    <property type="evidence" value="ECO:0007669"/>
    <property type="project" value="UniProtKB-KW"/>
</dbReference>
<dbReference type="GO" id="GO:0008009">
    <property type="term" value="F:chemokine activity"/>
    <property type="evidence" value="ECO:0007669"/>
    <property type="project" value="InterPro"/>
</dbReference>
<dbReference type="GO" id="GO:0008083">
    <property type="term" value="F:growth factor activity"/>
    <property type="evidence" value="ECO:0007669"/>
    <property type="project" value="UniProtKB-KW"/>
</dbReference>
<dbReference type="GO" id="GO:0006955">
    <property type="term" value="P:immune response"/>
    <property type="evidence" value="ECO:0007669"/>
    <property type="project" value="InterPro"/>
</dbReference>
<dbReference type="GO" id="GO:0006954">
    <property type="term" value="P:inflammatory response"/>
    <property type="evidence" value="ECO:0007669"/>
    <property type="project" value="UniProtKB-KW"/>
</dbReference>
<dbReference type="CDD" id="cd00273">
    <property type="entry name" value="Chemokine_CXC"/>
    <property type="match status" value="1"/>
</dbReference>
<dbReference type="FunFam" id="2.40.50.40:FF:000004">
    <property type="entry name" value="C-X-C motif chemokine"/>
    <property type="match status" value="1"/>
</dbReference>
<dbReference type="Gene3D" id="2.40.50.40">
    <property type="match status" value="1"/>
</dbReference>
<dbReference type="InterPro" id="IPR039809">
    <property type="entry name" value="Chemokine_b/g/d"/>
</dbReference>
<dbReference type="InterPro" id="IPR001089">
    <property type="entry name" value="Chemokine_CXC"/>
</dbReference>
<dbReference type="InterPro" id="IPR018048">
    <property type="entry name" value="Chemokine_CXC_CS"/>
</dbReference>
<dbReference type="InterPro" id="IPR001811">
    <property type="entry name" value="Chemokine_IL8-like_dom"/>
</dbReference>
<dbReference type="InterPro" id="IPR033899">
    <property type="entry name" value="CXC_Chemokine_domain"/>
</dbReference>
<dbReference type="InterPro" id="IPR036048">
    <property type="entry name" value="Interleukin_8-like_sf"/>
</dbReference>
<dbReference type="PANTHER" id="PTHR12015:SF192">
    <property type="entry name" value="GROWTH-REGULATED ALPHA PROTEIN"/>
    <property type="match status" value="1"/>
</dbReference>
<dbReference type="PANTHER" id="PTHR12015">
    <property type="entry name" value="SMALL INDUCIBLE CYTOKINE A"/>
    <property type="match status" value="1"/>
</dbReference>
<dbReference type="Pfam" id="PF00048">
    <property type="entry name" value="IL8"/>
    <property type="match status" value="1"/>
</dbReference>
<dbReference type="PRINTS" id="PR00436">
    <property type="entry name" value="INTERLEUKIN8"/>
</dbReference>
<dbReference type="PRINTS" id="PR00437">
    <property type="entry name" value="SMALLCYTKCXC"/>
</dbReference>
<dbReference type="SMART" id="SM00199">
    <property type="entry name" value="SCY"/>
    <property type="match status" value="1"/>
</dbReference>
<dbReference type="SUPFAM" id="SSF54117">
    <property type="entry name" value="Interleukin 8-like chemokines"/>
    <property type="match status" value="1"/>
</dbReference>
<dbReference type="PROSITE" id="PS00471">
    <property type="entry name" value="SMALL_CYTOKINES_CXC"/>
    <property type="match status" value="1"/>
</dbReference>
<protein>
    <recommendedName>
        <fullName>Growth-regulated protein homolog gamma</fullName>
        <shortName>GRO-gamma</shortName>
    </recommendedName>
</protein>
<evidence type="ECO:0000250" key="1"/>
<evidence type="ECO:0000255" key="2"/>
<evidence type="ECO:0000305" key="3"/>
<comment type="subcellular location">
    <subcellularLocation>
        <location>Secreted</location>
    </subcellularLocation>
</comment>
<comment type="similarity">
    <text evidence="3">Belongs to the intercrine alpha (chemokine CxC) family.</text>
</comment>